<protein>
    <recommendedName>
        <fullName evidence="7">Protein LIAT1</fullName>
    </recommendedName>
    <alternativeName>
        <fullName evidence="9">Ligand of ATE1 protein</fullName>
    </alternativeName>
</protein>
<keyword id="KW-0025">Alternative splicing</keyword>
<keyword id="KW-0963">Cytoplasm</keyword>
<keyword id="KW-0539">Nucleus</keyword>
<keyword id="KW-1267">Proteomics identification</keyword>
<keyword id="KW-1185">Reference proteome</keyword>
<keyword id="KW-0677">Repeat</keyword>
<feature type="chain" id="PRO_0000340233" description="Protein LIAT1">
    <location>
        <begin position="1"/>
        <end position="453"/>
    </location>
</feature>
<feature type="repeat" description="1">
    <location>
        <begin position="201"/>
        <end position="210"/>
    </location>
</feature>
<feature type="repeat" description="2">
    <location>
        <begin position="211"/>
        <end position="220"/>
    </location>
</feature>
<feature type="repeat" description="3">
    <location>
        <begin position="221"/>
        <end position="230"/>
    </location>
</feature>
<feature type="repeat" description="4">
    <location>
        <begin position="231"/>
        <end position="240"/>
    </location>
</feature>
<feature type="repeat" description="5">
    <location>
        <begin position="241"/>
        <end position="250"/>
    </location>
</feature>
<feature type="repeat" description="6">
    <location>
        <begin position="251"/>
        <end position="260"/>
    </location>
</feature>
<feature type="repeat" description="7">
    <location>
        <begin position="261"/>
        <end position="270"/>
    </location>
</feature>
<feature type="repeat" description="8">
    <location>
        <begin position="271"/>
        <end position="280"/>
    </location>
</feature>
<feature type="repeat" description="9">
    <location>
        <begin position="281"/>
        <end position="290"/>
    </location>
</feature>
<feature type="repeat" description="10">
    <location>
        <begin position="291"/>
        <end position="300"/>
    </location>
</feature>
<feature type="repeat" description="11">
    <location>
        <begin position="301"/>
        <end position="310"/>
    </location>
</feature>
<feature type="repeat" description="12">
    <location>
        <begin position="311"/>
        <end position="320"/>
    </location>
</feature>
<feature type="repeat" description="13">
    <location>
        <begin position="321"/>
        <end position="330"/>
    </location>
</feature>
<feature type="repeat" description="14">
    <location>
        <begin position="331"/>
        <end position="340"/>
    </location>
</feature>
<feature type="repeat" description="15">
    <location>
        <begin position="341"/>
        <end position="350"/>
    </location>
</feature>
<feature type="repeat" description="16">
    <location>
        <begin position="351"/>
        <end position="360"/>
    </location>
</feature>
<feature type="repeat" description="17">
    <location>
        <begin position="361"/>
        <end position="370"/>
    </location>
</feature>
<feature type="repeat" description="18">
    <location>
        <begin position="371"/>
        <end position="380"/>
    </location>
</feature>
<feature type="repeat" description="19">
    <location>
        <begin position="381"/>
        <end position="390"/>
    </location>
</feature>
<feature type="repeat" description="20">
    <location>
        <begin position="391"/>
        <end position="400"/>
    </location>
</feature>
<feature type="region of interest" description="Disordered" evidence="2">
    <location>
        <begin position="1"/>
        <end position="152"/>
    </location>
</feature>
<feature type="region of interest" description="Lysine-rich domain" evidence="7">
    <location>
        <begin position="82"/>
        <end position="103"/>
    </location>
</feature>
<feature type="region of interest" description="Interaction with ATE1" evidence="1">
    <location>
        <begin position="145"/>
        <end position="197"/>
    </location>
</feature>
<feature type="region of interest" description="20 X 10 AA approximate tandem repeat of A-L-K-G-F-H-P-D-P-E">
    <location>
        <begin position="201"/>
        <end position="400"/>
    </location>
</feature>
<feature type="region of interest" description="Disordered" evidence="2">
    <location>
        <begin position="225"/>
        <end position="306"/>
    </location>
</feature>
<feature type="region of interest" description="Disordered" evidence="2">
    <location>
        <begin position="320"/>
        <end position="432"/>
    </location>
</feature>
<feature type="compositionally biased region" description="Basic residues" evidence="2">
    <location>
        <begin position="83"/>
        <end position="96"/>
    </location>
</feature>
<feature type="compositionally biased region" description="Low complexity" evidence="2">
    <location>
        <begin position="106"/>
        <end position="117"/>
    </location>
</feature>
<feature type="compositionally biased region" description="Basic and acidic residues" evidence="2">
    <location>
        <begin position="125"/>
        <end position="145"/>
    </location>
</feature>
<feature type="compositionally biased region" description="Basic and acidic residues" evidence="2">
    <location>
        <begin position="320"/>
        <end position="396"/>
    </location>
</feature>
<feature type="splice variant" id="VSP_034195" description="In isoform 3." evidence="6">
    <location>
        <begin position="201"/>
        <end position="220"/>
    </location>
</feature>
<feature type="splice variant" id="VSP_034196" description="In isoform 4." evidence="6">
    <location>
        <begin position="236"/>
        <end position="265"/>
    </location>
</feature>
<feature type="splice variant" id="VSP_034197" description="In isoform 2." evidence="6">
    <location>
        <begin position="256"/>
        <end position="265"/>
    </location>
</feature>
<feature type="splice variant" id="VSP_034198" description="In isoform 2." evidence="6">
    <location>
        <begin position="348"/>
        <end position="367"/>
    </location>
</feature>
<feature type="sequence variant" id="VAR_044008" description="In dbSNP:rs4581766." evidence="4">
    <original>E</original>
    <variation>K</variation>
    <location>
        <position position="56"/>
    </location>
</feature>
<feature type="sequence variant" id="VAR_044009" description="In dbSNP:rs35229416." evidence="3 4">
    <original>D</original>
    <variation>E</variation>
    <location>
        <position position="220"/>
    </location>
</feature>
<feature type="sequence conflict" description="In Ref. 3; AAI41807." evidence="7" ref="3">
    <original>Q</original>
    <variation>L</variation>
    <location>
        <position position="105"/>
    </location>
</feature>
<feature type="sequence conflict" description="In Ref. 3; AAH57385." evidence="7" ref="3">
    <original>L</original>
    <variation>P</variation>
    <location>
        <position position="114"/>
    </location>
</feature>
<feature type="sequence conflict" description="In Ref. 3; AAH57385." evidence="7" ref="3">
    <original>E</original>
    <variation>D</variation>
    <location>
        <position position="240"/>
    </location>
</feature>
<evidence type="ECO:0000250" key="1">
    <source>
        <dbReference type="UniProtKB" id="Q810M6"/>
    </source>
</evidence>
<evidence type="ECO:0000256" key="2">
    <source>
        <dbReference type="SAM" id="MobiDB-lite"/>
    </source>
</evidence>
<evidence type="ECO:0000269" key="3">
    <source>
    </source>
</evidence>
<evidence type="ECO:0000269" key="4">
    <source>
    </source>
</evidence>
<evidence type="ECO:0000269" key="5">
    <source>
    </source>
</evidence>
<evidence type="ECO:0000303" key="6">
    <source>
    </source>
</evidence>
<evidence type="ECO:0000305" key="7"/>
<evidence type="ECO:0000305" key="8">
    <source>
    </source>
</evidence>
<evidence type="ECO:0000312" key="9">
    <source>
        <dbReference type="HGNC" id="HGNC:33800"/>
    </source>
</evidence>
<organism>
    <name type="scientific">Homo sapiens</name>
    <name type="common">Human</name>
    <dbReference type="NCBI Taxonomy" id="9606"/>
    <lineage>
        <taxon>Eukaryota</taxon>
        <taxon>Metazoa</taxon>
        <taxon>Chordata</taxon>
        <taxon>Craniata</taxon>
        <taxon>Vertebrata</taxon>
        <taxon>Euteleostomi</taxon>
        <taxon>Mammalia</taxon>
        <taxon>Eutheria</taxon>
        <taxon>Euarchontoglires</taxon>
        <taxon>Primates</taxon>
        <taxon>Haplorrhini</taxon>
        <taxon>Catarrhini</taxon>
        <taxon>Hominidae</taxon>
        <taxon>Homo</taxon>
    </lineage>
</organism>
<comment type="function">
    <text evidence="1">Participates in nucleolar liquid-liquid phase separation (LLPS) through its N-terminal intrinsically disordered region (IDR). May be involved in ATE1-mediated N-terminal arginylation.</text>
</comment>
<comment type="subunit">
    <text evidence="1">Self-associates (via Lys-rich domain); targets LIAT1 to the nucleolus. Interacts with ATE1; it is not a substrate of ATE1, the interaction takes place in the cytoplasm and seems to increase ATE1 arginyltransferase activity. Interacts with JMJD6 and MRPS14.</text>
</comment>
<comment type="interaction">
    <interactant intactId="EBI-25830459">
        <id>Q6ZQX7-4</id>
    </interactant>
    <interactant intactId="EBI-367510">
        <id>P68133</id>
        <label>ACTA1</label>
    </interactant>
    <organismsDiffer>false</organismsDiffer>
    <experiments>3</experiments>
</comment>
<comment type="interaction">
    <interactant intactId="EBI-25830459">
        <id>Q6ZQX7-4</id>
    </interactant>
    <interactant intactId="EBI-948169">
        <id>P13637</id>
        <label>ATP1A3</label>
    </interactant>
    <organismsDiffer>false</organismsDiffer>
    <experiments>3</experiments>
</comment>
<comment type="interaction">
    <interactant intactId="EBI-25830459">
        <id>Q6ZQX7-4</id>
    </interactant>
    <interactant intactId="EBI-3928618">
        <id>P08684</id>
        <label>CYP3A4</label>
    </interactant>
    <organismsDiffer>false</organismsDiffer>
    <experiments>3</experiments>
</comment>
<comment type="interaction">
    <interactant intactId="EBI-25830459">
        <id>Q6ZQX7-4</id>
    </interactant>
    <interactant intactId="EBI-78473">
        <id>P03372</id>
        <label>ESR1</label>
    </interactant>
    <organismsDiffer>false</organismsDiffer>
    <experiments>3</experiments>
</comment>
<comment type="interaction">
    <interactant intactId="EBI-25830459">
        <id>Q6ZQX7-4</id>
    </interactant>
    <interactant intactId="EBI-352528">
        <id>P10809</id>
        <label>HSPD1</label>
    </interactant>
    <organismsDiffer>false</organismsDiffer>
    <experiments>3</experiments>
</comment>
<comment type="interaction">
    <interactant intactId="EBI-25830459">
        <id>Q6ZQX7-4</id>
    </interactant>
    <interactant intactId="EBI-716404">
        <id>P16284</id>
        <label>PECAM1</label>
    </interactant>
    <organismsDiffer>false</organismsDiffer>
    <experiments>3</experiments>
</comment>
<comment type="interaction">
    <interactant intactId="EBI-25830459">
        <id>Q6ZQX7-4</id>
    </interactant>
    <interactant intactId="EBI-2827556">
        <id>Q13393</id>
        <label>PLD1</label>
    </interactant>
    <organismsDiffer>false</organismsDiffer>
    <experiments>3</experiments>
</comment>
<comment type="interaction">
    <interactant intactId="EBI-25830459">
        <id>Q6ZQX7-4</id>
    </interactant>
    <interactant intactId="EBI-5774511">
        <id>P05771-2</id>
        <label>PRKCB</label>
    </interactant>
    <organismsDiffer>false</organismsDiffer>
    <experiments>3</experiments>
</comment>
<comment type="interaction">
    <interactant intactId="EBI-25830459">
        <id>Q6ZQX7-4</id>
    </interactant>
    <interactant intactId="EBI-399437">
        <id>P20339</id>
        <label>RAB5A</label>
    </interactant>
    <organismsDiffer>false</organismsDiffer>
    <experiments>3</experiments>
</comment>
<comment type="interaction">
    <interactant intactId="EBI-25830459">
        <id>Q6ZQX7-4</id>
    </interactant>
    <interactant intactId="EBI-353844">
        <id>P08670</id>
        <label>VIM</label>
    </interactant>
    <organismsDiffer>false</organismsDiffer>
    <experiments>3</experiments>
</comment>
<comment type="interaction">
    <interactant intactId="EBI-25830459">
        <id>Q6ZQX7-4</id>
    </interactant>
    <interactant intactId="EBI-25896548">
        <id>P04275-2</id>
        <label>VWF</label>
    </interactant>
    <organismsDiffer>false</organismsDiffer>
    <experiments>3</experiments>
</comment>
<comment type="subcellular location">
    <subcellularLocation>
        <location evidence="5">Nucleus</location>
        <location evidence="5">Nucleolus</location>
    </subcellularLocation>
    <subcellularLocation>
        <location evidence="5">Cytoplasm</location>
    </subcellularLocation>
    <text evidence="5">Shuttles between the cytoplasm and nucleoplasm, a significant portion localizes to the nucleolus.</text>
</comment>
<comment type="alternative products">
    <event type="alternative splicing"/>
    <isoform>
        <id>Q6ZQX7-1</id>
        <name>1</name>
        <sequence type="displayed"/>
    </isoform>
    <isoform>
        <id>Q6ZQX7-2</id>
        <name>2</name>
        <sequence type="described" ref="VSP_034197 VSP_034198"/>
    </isoform>
    <isoform>
        <id>Q6ZQX7-3</id>
        <name>3</name>
        <sequence type="described" ref="VSP_034195"/>
    </isoform>
    <isoform>
        <id>Q6ZQX7-4</id>
        <name>4</name>
        <sequence type="described" ref="VSP_034196"/>
    </isoform>
</comment>
<comment type="domain">
    <text evidence="8">LIAT1 proteins of some primates, from macaques to humans, contain tandem repeats of a 10-residue sequence, whereas LIAT1 proteins of other mammals contain a single copy of this motif. Quantities of these repeats are, in general, different in LIAT1 of different primates. For example, there are 1, 4, 13, 13, 17, and 17 repeats in the gibbon, gorilla, orangutan, bonobo, neanderthal, and human LIAT1, respectively.</text>
</comment>
<comment type="domain">
    <text evidence="1">The N-terminal intrinsically disordered region (IDR) facilitates its liquid-liquid phase separation (LLPS) in the nucleolus. In the IDR, the lysine-rich domain mediates self-association and targeting to the nucleolus.</text>
</comment>
<comment type="PTM">
    <text evidence="1">Post-translationally modified by JMJD6 lysyl-hydroxylase activity at its Lys-rich domain, which inhibits its self-association and nucleolar localization.</text>
</comment>
<accession>Q6ZQX7</accession>
<accession>A5D8T6</accession>
<accession>Q6NSI2</accession>
<accession>Q6PFW9</accession>
<name>LIAT1_HUMAN</name>
<gene>
    <name evidence="9" type="primary">LIAT1</name>
    <name evidence="9" type="synonym">C17orf97</name>
</gene>
<dbReference type="EMBL" id="AK128660">
    <property type="protein sequence ID" value="BAC87555.1"/>
    <property type="molecule type" value="mRNA"/>
</dbReference>
<dbReference type="EMBL" id="AC141424">
    <property type="status" value="NOT_ANNOTATED_CDS"/>
    <property type="molecule type" value="Genomic_DNA"/>
</dbReference>
<dbReference type="EMBL" id="BC057385">
    <property type="protein sequence ID" value="AAH57385.1"/>
    <property type="molecule type" value="mRNA"/>
</dbReference>
<dbReference type="EMBL" id="BC070116">
    <property type="protein sequence ID" value="AAH70116.2"/>
    <property type="molecule type" value="mRNA"/>
</dbReference>
<dbReference type="EMBL" id="BC141806">
    <property type="protein sequence ID" value="AAI41807.1"/>
    <property type="molecule type" value="mRNA"/>
</dbReference>
<dbReference type="CCDS" id="CCDS32519.2">
    <molecule id="Q6ZQX7-4"/>
</dbReference>
<dbReference type="RefSeq" id="NP_001013694.4">
    <molecule id="Q6ZQX7-4"/>
    <property type="nucleotide sequence ID" value="NM_001013672.5"/>
</dbReference>
<dbReference type="BioGRID" id="134634">
    <property type="interactions" value="4"/>
</dbReference>
<dbReference type="FunCoup" id="Q6ZQX7">
    <property type="interactions" value="3"/>
</dbReference>
<dbReference type="IntAct" id="Q6ZQX7">
    <property type="interactions" value="13"/>
</dbReference>
<dbReference type="MINT" id="Q6ZQX7"/>
<dbReference type="STRING" id="9606.ENSP00000353245"/>
<dbReference type="iPTMnet" id="Q6ZQX7"/>
<dbReference type="PhosphoSitePlus" id="Q6ZQX7"/>
<dbReference type="BioMuta" id="C17orf97"/>
<dbReference type="DMDM" id="327478504"/>
<dbReference type="jPOST" id="Q6ZQX7"/>
<dbReference type="MassIVE" id="Q6ZQX7"/>
<dbReference type="PaxDb" id="9606-ENSP00000353245"/>
<dbReference type="PeptideAtlas" id="Q6ZQX7"/>
<dbReference type="ProteomicsDB" id="68096">
    <molecule id="Q6ZQX7-1"/>
</dbReference>
<dbReference type="ProteomicsDB" id="68097">
    <molecule id="Q6ZQX7-2"/>
</dbReference>
<dbReference type="ProteomicsDB" id="68098">
    <molecule id="Q6ZQX7-3"/>
</dbReference>
<dbReference type="ProteomicsDB" id="68099">
    <molecule id="Q6ZQX7-4"/>
</dbReference>
<dbReference type="Antibodypedia" id="10251">
    <property type="antibodies" value="42 antibodies from 12 providers"/>
</dbReference>
<dbReference type="DNASU" id="400566"/>
<dbReference type="Ensembl" id="ENST00000360127.7">
    <molecule id="Q6ZQX7-4"/>
    <property type="protein sequence ID" value="ENSP00000353245.6"/>
    <property type="gene ID" value="ENSG00000187624.9"/>
</dbReference>
<dbReference type="Ensembl" id="ENST00000639297.2">
    <molecule id="Q6ZQX7-4"/>
    <property type="protein sequence ID" value="ENSP00000491943.1"/>
    <property type="gene ID" value="ENSG00000283985.2"/>
</dbReference>
<dbReference type="GeneID" id="400566"/>
<dbReference type="KEGG" id="hsa:400566"/>
<dbReference type="MANE-Select" id="ENST00000360127.7">
    <molecule id="Q6ZQX7-4"/>
    <property type="protein sequence ID" value="ENSP00000353245.6"/>
    <property type="RefSeq nucleotide sequence ID" value="NM_001013672.5"/>
    <property type="RefSeq protein sequence ID" value="NP_001013694.4"/>
</dbReference>
<dbReference type="UCSC" id="uc021tna.1">
    <molecule id="Q6ZQX7-1"/>
    <property type="organism name" value="human"/>
</dbReference>
<dbReference type="AGR" id="HGNC:33800"/>
<dbReference type="CTD" id="400566"/>
<dbReference type="DisGeNET" id="400566"/>
<dbReference type="GeneCards" id="LIAT1"/>
<dbReference type="HGNC" id="HGNC:33800">
    <property type="gene designation" value="LIAT1"/>
</dbReference>
<dbReference type="HPA" id="ENSG00000187624">
    <property type="expression patterns" value="Tissue enriched (testis)"/>
</dbReference>
<dbReference type="neXtProt" id="NX_Q6ZQX7"/>
<dbReference type="OpenTargets" id="ENSG00000187624"/>
<dbReference type="PharmGKB" id="PA162378582"/>
<dbReference type="VEuPathDB" id="HostDB:ENSG00000187624"/>
<dbReference type="eggNOG" id="ENOG502SC86">
    <property type="taxonomic scope" value="Eukaryota"/>
</dbReference>
<dbReference type="GeneTree" id="ENSGT00440000038370"/>
<dbReference type="HOGENOM" id="CLU_049741_0_0_1"/>
<dbReference type="InParanoid" id="Q6ZQX7"/>
<dbReference type="OMA" id="LKGFHTD"/>
<dbReference type="OrthoDB" id="15089at9604"/>
<dbReference type="PAN-GO" id="Q6ZQX7">
    <property type="GO annotations" value="1 GO annotation based on evolutionary models"/>
</dbReference>
<dbReference type="PhylomeDB" id="Q6ZQX7"/>
<dbReference type="TreeFam" id="TF337007"/>
<dbReference type="PathwayCommons" id="Q6ZQX7"/>
<dbReference type="SignaLink" id="Q6ZQX7"/>
<dbReference type="BioGRID-ORCS" id="400566">
    <property type="hits" value="15 hits in 1120 CRISPR screens"/>
</dbReference>
<dbReference type="GenomeRNAi" id="400566"/>
<dbReference type="Pharos" id="Q6ZQX7">
    <property type="development level" value="Tdark"/>
</dbReference>
<dbReference type="PRO" id="PR:Q6ZQX7"/>
<dbReference type="Proteomes" id="UP000005640">
    <property type="component" value="Chromosome 17"/>
</dbReference>
<dbReference type="RNAct" id="Q6ZQX7">
    <property type="molecule type" value="protein"/>
</dbReference>
<dbReference type="Bgee" id="ENSG00000187624">
    <property type="expression patterns" value="Expressed in left testis and 100 other cell types or tissues"/>
</dbReference>
<dbReference type="ExpressionAtlas" id="Q6ZQX7">
    <property type="expression patterns" value="baseline and differential"/>
</dbReference>
<dbReference type="GO" id="GO:0005737">
    <property type="term" value="C:cytoplasm"/>
    <property type="evidence" value="ECO:0007669"/>
    <property type="project" value="UniProtKB-SubCell"/>
</dbReference>
<dbReference type="GO" id="GO:0005730">
    <property type="term" value="C:nucleolus"/>
    <property type="evidence" value="ECO:0000250"/>
    <property type="project" value="UniProt"/>
</dbReference>
<dbReference type="GO" id="GO:0140693">
    <property type="term" value="F:molecular condensate scaffold activity"/>
    <property type="evidence" value="ECO:0000250"/>
    <property type="project" value="UniProt"/>
</dbReference>
<dbReference type="GO" id="GO:0140694">
    <property type="term" value="P:membraneless organelle assembly"/>
    <property type="evidence" value="ECO:0000250"/>
    <property type="project" value="UniProt"/>
</dbReference>
<dbReference type="GO" id="GO:0016598">
    <property type="term" value="P:protein arginylation"/>
    <property type="evidence" value="ECO:0000250"/>
    <property type="project" value="UniProtKB"/>
</dbReference>
<dbReference type="InterPro" id="IPR038794">
    <property type="entry name" value="LIAT1"/>
</dbReference>
<dbReference type="PANTHER" id="PTHR36474">
    <property type="entry name" value="PROTEIN LIAT1"/>
    <property type="match status" value="1"/>
</dbReference>
<dbReference type="PANTHER" id="PTHR36474:SF1">
    <property type="entry name" value="PROTEIN LIAT1"/>
    <property type="match status" value="1"/>
</dbReference>
<proteinExistence type="evidence at protein level"/>
<sequence>METRGPGLAVRAESRRLVGIGPRAPPGRVGLQPSGRLDRRGGAGTMGYKDNDGEEEEREGGAAGPRGSRLPPITGGASELAKRKVKKKKRKKKTKGSGKGDDKHQSQSLKSQPLSSSFHDILSPCKERGPKPEHRQSKVEKKHLPSDSSTVSLPDFAEIENLANRINESLRWDGILADPEAEKERIRIYKLNRRKRYRCLALKGFHPDPEALKGFHPDPDALKGFHPDPEALKGFHPDPEALKGFHPDPEALKGFHPDPEALKGIHPDPEALKGIHPDPEALKGFHPDPEALKGFHPDPEALKGFHTDPEALKGFHIDPEALKGFHPDPKALKGFHPDPKALKGFHTDPEALKGFHPDPKALKGFHPDPEALKGFHPDPEALKGFHPDPEALKGFHTDPNAEEAPENLPYLSDKDGSSSHRQPTSKAECPNLCFEGNLTPKLLHSDLAPTLLE</sequence>
<reference key="1">
    <citation type="journal article" date="2004" name="Nat. Genet.">
        <title>Complete sequencing and characterization of 21,243 full-length human cDNAs.</title>
        <authorList>
            <person name="Ota T."/>
            <person name="Suzuki Y."/>
            <person name="Nishikawa T."/>
            <person name="Otsuki T."/>
            <person name="Sugiyama T."/>
            <person name="Irie R."/>
            <person name="Wakamatsu A."/>
            <person name="Hayashi K."/>
            <person name="Sato H."/>
            <person name="Nagai K."/>
            <person name="Kimura K."/>
            <person name="Makita H."/>
            <person name="Sekine M."/>
            <person name="Obayashi M."/>
            <person name="Nishi T."/>
            <person name="Shibahara T."/>
            <person name="Tanaka T."/>
            <person name="Ishii S."/>
            <person name="Yamamoto J."/>
            <person name="Saito K."/>
            <person name="Kawai Y."/>
            <person name="Isono Y."/>
            <person name="Nakamura Y."/>
            <person name="Nagahari K."/>
            <person name="Murakami K."/>
            <person name="Yasuda T."/>
            <person name="Iwayanagi T."/>
            <person name="Wagatsuma M."/>
            <person name="Shiratori A."/>
            <person name="Sudo H."/>
            <person name="Hosoiri T."/>
            <person name="Kaku Y."/>
            <person name="Kodaira H."/>
            <person name="Kondo H."/>
            <person name="Sugawara M."/>
            <person name="Takahashi M."/>
            <person name="Kanda K."/>
            <person name="Yokoi T."/>
            <person name="Furuya T."/>
            <person name="Kikkawa E."/>
            <person name="Omura Y."/>
            <person name="Abe K."/>
            <person name="Kamihara K."/>
            <person name="Katsuta N."/>
            <person name="Sato K."/>
            <person name="Tanikawa M."/>
            <person name="Yamazaki M."/>
            <person name="Ninomiya K."/>
            <person name="Ishibashi T."/>
            <person name="Yamashita H."/>
            <person name="Murakawa K."/>
            <person name="Fujimori K."/>
            <person name="Tanai H."/>
            <person name="Kimata M."/>
            <person name="Watanabe M."/>
            <person name="Hiraoka S."/>
            <person name="Chiba Y."/>
            <person name="Ishida S."/>
            <person name="Ono Y."/>
            <person name="Takiguchi S."/>
            <person name="Watanabe S."/>
            <person name="Yosida M."/>
            <person name="Hotuta T."/>
            <person name="Kusano J."/>
            <person name="Kanehori K."/>
            <person name="Takahashi-Fujii A."/>
            <person name="Hara H."/>
            <person name="Tanase T.-O."/>
            <person name="Nomura Y."/>
            <person name="Togiya S."/>
            <person name="Komai F."/>
            <person name="Hara R."/>
            <person name="Takeuchi K."/>
            <person name="Arita M."/>
            <person name="Imose N."/>
            <person name="Musashino K."/>
            <person name="Yuuki H."/>
            <person name="Oshima A."/>
            <person name="Sasaki N."/>
            <person name="Aotsuka S."/>
            <person name="Yoshikawa Y."/>
            <person name="Matsunawa H."/>
            <person name="Ichihara T."/>
            <person name="Shiohata N."/>
            <person name="Sano S."/>
            <person name="Moriya S."/>
            <person name="Momiyama H."/>
            <person name="Satoh N."/>
            <person name="Takami S."/>
            <person name="Terashima Y."/>
            <person name="Suzuki O."/>
            <person name="Nakagawa S."/>
            <person name="Senoh A."/>
            <person name="Mizoguchi H."/>
            <person name="Goto Y."/>
            <person name="Shimizu F."/>
            <person name="Wakebe H."/>
            <person name="Hishigaki H."/>
            <person name="Watanabe T."/>
            <person name="Sugiyama A."/>
            <person name="Takemoto M."/>
            <person name="Kawakami B."/>
            <person name="Yamazaki M."/>
            <person name="Watanabe K."/>
            <person name="Kumagai A."/>
            <person name="Itakura S."/>
            <person name="Fukuzumi Y."/>
            <person name="Fujimori Y."/>
            <person name="Komiyama M."/>
            <person name="Tashiro H."/>
            <person name="Tanigami A."/>
            <person name="Fujiwara T."/>
            <person name="Ono T."/>
            <person name="Yamada K."/>
            <person name="Fujii Y."/>
            <person name="Ozaki K."/>
            <person name="Hirao M."/>
            <person name="Ohmori Y."/>
            <person name="Kawabata A."/>
            <person name="Hikiji T."/>
            <person name="Kobatake N."/>
            <person name="Inagaki H."/>
            <person name="Ikema Y."/>
            <person name="Okamoto S."/>
            <person name="Okitani R."/>
            <person name="Kawakami T."/>
            <person name="Noguchi S."/>
            <person name="Itoh T."/>
            <person name="Shigeta K."/>
            <person name="Senba T."/>
            <person name="Matsumura K."/>
            <person name="Nakajima Y."/>
            <person name="Mizuno T."/>
            <person name="Morinaga M."/>
            <person name="Sasaki M."/>
            <person name="Togashi T."/>
            <person name="Oyama M."/>
            <person name="Hata H."/>
            <person name="Watanabe M."/>
            <person name="Komatsu T."/>
            <person name="Mizushima-Sugano J."/>
            <person name="Satoh T."/>
            <person name="Shirai Y."/>
            <person name="Takahashi Y."/>
            <person name="Nakagawa K."/>
            <person name="Okumura K."/>
            <person name="Nagase T."/>
            <person name="Nomura N."/>
            <person name="Kikuchi H."/>
            <person name="Masuho Y."/>
            <person name="Yamashita R."/>
            <person name="Nakai K."/>
            <person name="Yada T."/>
            <person name="Nakamura Y."/>
            <person name="Ohara O."/>
            <person name="Isogai T."/>
            <person name="Sugano S."/>
        </authorList>
    </citation>
    <scope>NUCLEOTIDE SEQUENCE [LARGE SCALE MRNA] (ISOFORM 1)</scope>
    <scope>VARIANT GLU-220</scope>
    <source>
        <tissue>Stomach</tissue>
    </source>
</reference>
<reference key="2">
    <citation type="journal article" date="2006" name="Nature">
        <title>DNA sequence of human chromosome 17 and analysis of rearrangement in the human lineage.</title>
        <authorList>
            <person name="Zody M.C."/>
            <person name="Garber M."/>
            <person name="Adams D.J."/>
            <person name="Sharpe T."/>
            <person name="Harrow J."/>
            <person name="Lupski J.R."/>
            <person name="Nicholson C."/>
            <person name="Searle S.M."/>
            <person name="Wilming L."/>
            <person name="Young S.K."/>
            <person name="Abouelleil A."/>
            <person name="Allen N.R."/>
            <person name="Bi W."/>
            <person name="Bloom T."/>
            <person name="Borowsky M.L."/>
            <person name="Bugalter B.E."/>
            <person name="Butler J."/>
            <person name="Chang J.L."/>
            <person name="Chen C.-K."/>
            <person name="Cook A."/>
            <person name="Corum B."/>
            <person name="Cuomo C.A."/>
            <person name="de Jong P.J."/>
            <person name="DeCaprio D."/>
            <person name="Dewar K."/>
            <person name="FitzGerald M."/>
            <person name="Gilbert J."/>
            <person name="Gibson R."/>
            <person name="Gnerre S."/>
            <person name="Goldstein S."/>
            <person name="Grafham D.V."/>
            <person name="Grocock R."/>
            <person name="Hafez N."/>
            <person name="Hagopian D.S."/>
            <person name="Hart E."/>
            <person name="Norman C.H."/>
            <person name="Humphray S."/>
            <person name="Jaffe D.B."/>
            <person name="Jones M."/>
            <person name="Kamal M."/>
            <person name="Khodiyar V.K."/>
            <person name="LaButti K."/>
            <person name="Laird G."/>
            <person name="Lehoczky J."/>
            <person name="Liu X."/>
            <person name="Lokyitsang T."/>
            <person name="Loveland J."/>
            <person name="Lui A."/>
            <person name="Macdonald P."/>
            <person name="Major J.E."/>
            <person name="Matthews L."/>
            <person name="Mauceli E."/>
            <person name="McCarroll S.A."/>
            <person name="Mihalev A.H."/>
            <person name="Mudge J."/>
            <person name="Nguyen C."/>
            <person name="Nicol R."/>
            <person name="O'Leary S.B."/>
            <person name="Osoegawa K."/>
            <person name="Schwartz D.C."/>
            <person name="Shaw-Smith C."/>
            <person name="Stankiewicz P."/>
            <person name="Steward C."/>
            <person name="Swarbreck D."/>
            <person name="Venkataraman V."/>
            <person name="Whittaker C.A."/>
            <person name="Yang X."/>
            <person name="Zimmer A.R."/>
            <person name="Bradley A."/>
            <person name="Hubbard T."/>
            <person name="Birren B.W."/>
            <person name="Rogers J."/>
            <person name="Lander E.S."/>
            <person name="Nusbaum C."/>
        </authorList>
    </citation>
    <scope>NUCLEOTIDE SEQUENCE [LARGE SCALE GENOMIC DNA]</scope>
</reference>
<reference key="3">
    <citation type="journal article" date="2004" name="Genome Res.">
        <title>The status, quality, and expansion of the NIH full-length cDNA project: the Mammalian Gene Collection (MGC).</title>
        <authorList>
            <consortium name="The MGC Project Team"/>
        </authorList>
    </citation>
    <scope>NUCLEOTIDE SEQUENCE [LARGE SCALE MRNA] (ISOFORM 2)</scope>
    <scope>NUCLEOTIDE SEQUENCE [LARGE SCALE MRNA] OF 12-453 (ISOFORM 3)</scope>
    <scope>NUCLEOTIDE SEQUENCE [LARGE SCALE MRNA] OF 21-453 (ISOFORM 4)</scope>
    <scope>VARIANTS LYS-56 AND GLU-220</scope>
    <source>
        <tissue>Testis</tissue>
    </source>
</reference>
<reference key="4">
    <citation type="journal article" date="2014" name="Proc. Natl. Acad. Sci. U.S.A.">
        <title>Liat1, an arginyltransferase-binding protein whose evolution among primates involved changes in the numbers of its 10-residue repeats.</title>
        <authorList>
            <person name="Brower C.S."/>
            <person name="Rosen C.E."/>
            <person name="Jones R.H."/>
            <person name="Wadas B.C."/>
            <person name="Piatkov K.I."/>
            <person name="Varshavsky A."/>
        </authorList>
    </citation>
    <scope>DOMAIN</scope>
</reference>
<reference key="5">
    <citation type="journal article" date="2021" name="Proc. Natl. Acad. Sci. U.S.A.">
        <title>The Ligand of Ate1 is intrinsically disordered and participates in nucleolar phase separation regulated by Jumonji Domain Containing 6.</title>
        <authorList>
            <person name="Arva A."/>
            <person name="Kasu Y.A.T."/>
            <person name="Duncan J."/>
            <person name="Alkhatatbeh M.A."/>
            <person name="Brower C.S."/>
        </authorList>
    </citation>
    <scope>FUNCTION</scope>
    <scope>SUBCELLULAR LOCATION</scope>
    <scope>DOMAIN</scope>
    <scope>SUBUNIT</scope>
</reference>